<keyword id="KW-0414">Isoprene biosynthesis</keyword>
<keyword id="KW-0464">Manganese</keyword>
<keyword id="KW-0479">Metal-binding</keyword>
<keyword id="KW-0521">NADP</keyword>
<keyword id="KW-0560">Oxidoreductase</keyword>
<keyword id="KW-1185">Reference proteome</keyword>
<reference key="1">
    <citation type="journal article" date="2003" name="Proc. Natl. Acad. Sci. U.S.A.">
        <title>The complete genome sequence of Chromobacterium violaceum reveals remarkable and exploitable bacterial adaptability.</title>
        <authorList>
            <person name="Vasconcelos A.T.R."/>
            <person name="de Almeida D.F."/>
            <person name="Hungria M."/>
            <person name="Guimaraes C.T."/>
            <person name="Antonio R.V."/>
            <person name="Almeida F.C."/>
            <person name="de Almeida L.G.P."/>
            <person name="de Almeida R."/>
            <person name="Alves-Gomes J.A."/>
            <person name="Andrade E.M."/>
            <person name="Araripe J."/>
            <person name="de Araujo M.F.F."/>
            <person name="Astolfi-Filho S."/>
            <person name="Azevedo V."/>
            <person name="Baptista A.J."/>
            <person name="Bataus L.A.M."/>
            <person name="Batista J.S."/>
            <person name="Belo A."/>
            <person name="van den Berg C."/>
            <person name="Bogo M."/>
            <person name="Bonatto S."/>
            <person name="Bordignon J."/>
            <person name="Brigido M.M."/>
            <person name="Brito C.A."/>
            <person name="Brocchi M."/>
            <person name="Burity H.A."/>
            <person name="Camargo A.A."/>
            <person name="Cardoso D.D.P."/>
            <person name="Carneiro N.P."/>
            <person name="Carraro D.M."/>
            <person name="Carvalho C.M.B."/>
            <person name="Cascardo J.C.M."/>
            <person name="Cavada B.S."/>
            <person name="Chueire L.M.O."/>
            <person name="Creczynski-Pasa T.B."/>
            <person name="Cunha-Junior N.C."/>
            <person name="Fagundes N."/>
            <person name="Falcao C.L."/>
            <person name="Fantinatti F."/>
            <person name="Farias I.P."/>
            <person name="Felipe M.S.S."/>
            <person name="Ferrari L.P."/>
            <person name="Ferro J.A."/>
            <person name="Ferro M.I.T."/>
            <person name="Franco G.R."/>
            <person name="Freitas N.S.A."/>
            <person name="Furlan L.R."/>
            <person name="Gazzinelli R.T."/>
            <person name="Gomes E.A."/>
            <person name="Goncalves P.R."/>
            <person name="Grangeiro T.B."/>
            <person name="Grattapaglia D."/>
            <person name="Grisard E.C."/>
            <person name="Hanna E.S."/>
            <person name="Jardim S.N."/>
            <person name="Laurino J."/>
            <person name="Leoi L.C.T."/>
            <person name="Lima L.F.A."/>
            <person name="Loureiro M.F."/>
            <person name="Lyra M.C.C.P."/>
            <person name="Madeira H.M.F."/>
            <person name="Manfio G.P."/>
            <person name="Maranhao A.Q."/>
            <person name="Martins W.S."/>
            <person name="di Mauro S.M.Z."/>
            <person name="de Medeiros S.R.B."/>
            <person name="Meissner R.V."/>
            <person name="Moreira M.A.M."/>
            <person name="Nascimento F.F."/>
            <person name="Nicolas M.F."/>
            <person name="Oliveira J.G."/>
            <person name="Oliveira S.C."/>
            <person name="Paixao R.F.C."/>
            <person name="Parente J.A."/>
            <person name="Pedrosa F.O."/>
            <person name="Pena S.D.J."/>
            <person name="Pereira J.O."/>
            <person name="Pereira M."/>
            <person name="Pinto L.S.R.C."/>
            <person name="Pinto L.S."/>
            <person name="Porto J.I.R."/>
            <person name="Potrich D.P."/>
            <person name="Ramalho-Neto C.E."/>
            <person name="Reis A.M.M."/>
            <person name="Rigo L.U."/>
            <person name="Rondinelli E."/>
            <person name="Santos E.B.P."/>
            <person name="Santos F.R."/>
            <person name="Schneider M.P.C."/>
            <person name="Seuanez H.N."/>
            <person name="Silva A.M.R."/>
            <person name="da Silva A.L.C."/>
            <person name="Silva D.W."/>
            <person name="Silva R."/>
            <person name="Simoes I.C."/>
            <person name="Simon D."/>
            <person name="Soares C.M.A."/>
            <person name="Soares R.B.A."/>
            <person name="Souza E.M."/>
            <person name="Souza K.R.L."/>
            <person name="Souza R.C."/>
            <person name="Steffens M.B.R."/>
            <person name="Steindel M."/>
            <person name="Teixeira S.R."/>
            <person name="Urmenyi T."/>
            <person name="Vettore A."/>
            <person name="Wassem R."/>
            <person name="Zaha A."/>
            <person name="Simpson A.J.G."/>
        </authorList>
    </citation>
    <scope>NUCLEOTIDE SEQUENCE [LARGE SCALE GENOMIC DNA]</scope>
    <source>
        <strain>ATCC 12472 / DSM 30191 / JCM 1249 / CCUG 213 / NBRC 12614 / NCIMB 9131 / NCTC 9757 / MK</strain>
    </source>
</reference>
<protein>
    <recommendedName>
        <fullName evidence="1">1-deoxy-D-xylulose 5-phosphate reductoisomerase</fullName>
        <shortName evidence="1">DXP reductoisomerase</shortName>
        <ecNumber evidence="1">1.1.1.267</ecNumber>
    </recommendedName>
    <alternativeName>
        <fullName evidence="1">1-deoxyxylulose-5-phosphate reductoisomerase</fullName>
    </alternativeName>
    <alternativeName>
        <fullName evidence="1">2-C-methyl-D-erythritol 4-phosphate synthase</fullName>
    </alternativeName>
</protein>
<dbReference type="EC" id="1.1.1.267" evidence="1"/>
<dbReference type="EMBL" id="AE016825">
    <property type="protein sequence ID" value="AAQ59875.1"/>
    <property type="molecule type" value="Genomic_DNA"/>
</dbReference>
<dbReference type="RefSeq" id="WP_011135750.1">
    <property type="nucleotide sequence ID" value="NC_005085.1"/>
</dbReference>
<dbReference type="SMR" id="Q7NVY8"/>
<dbReference type="STRING" id="243365.CV_2202"/>
<dbReference type="KEGG" id="cvi:CV_2202"/>
<dbReference type="eggNOG" id="COG0743">
    <property type="taxonomic scope" value="Bacteria"/>
</dbReference>
<dbReference type="HOGENOM" id="CLU_035714_4_0_4"/>
<dbReference type="OrthoDB" id="9806546at2"/>
<dbReference type="UniPathway" id="UPA00056">
    <property type="reaction ID" value="UER00092"/>
</dbReference>
<dbReference type="Proteomes" id="UP000001424">
    <property type="component" value="Chromosome"/>
</dbReference>
<dbReference type="GO" id="GO:0030604">
    <property type="term" value="F:1-deoxy-D-xylulose-5-phosphate reductoisomerase activity"/>
    <property type="evidence" value="ECO:0007669"/>
    <property type="project" value="UniProtKB-UniRule"/>
</dbReference>
<dbReference type="GO" id="GO:0030145">
    <property type="term" value="F:manganese ion binding"/>
    <property type="evidence" value="ECO:0007669"/>
    <property type="project" value="TreeGrafter"/>
</dbReference>
<dbReference type="GO" id="GO:0070402">
    <property type="term" value="F:NADPH binding"/>
    <property type="evidence" value="ECO:0007669"/>
    <property type="project" value="InterPro"/>
</dbReference>
<dbReference type="GO" id="GO:0051484">
    <property type="term" value="P:isopentenyl diphosphate biosynthetic process, methylerythritol 4-phosphate pathway involved in terpenoid biosynthetic process"/>
    <property type="evidence" value="ECO:0007669"/>
    <property type="project" value="TreeGrafter"/>
</dbReference>
<dbReference type="FunFam" id="3.40.50.720:FF:000045">
    <property type="entry name" value="1-deoxy-D-xylulose 5-phosphate reductoisomerase"/>
    <property type="match status" value="1"/>
</dbReference>
<dbReference type="Gene3D" id="1.10.1740.10">
    <property type="match status" value="1"/>
</dbReference>
<dbReference type="Gene3D" id="3.40.50.720">
    <property type="entry name" value="NAD(P)-binding Rossmann-like Domain"/>
    <property type="match status" value="1"/>
</dbReference>
<dbReference type="HAMAP" id="MF_00183">
    <property type="entry name" value="DXP_reductoisom"/>
    <property type="match status" value="1"/>
</dbReference>
<dbReference type="InterPro" id="IPR003821">
    <property type="entry name" value="DXP_reductoisomerase"/>
</dbReference>
<dbReference type="InterPro" id="IPR013644">
    <property type="entry name" value="DXP_reductoisomerase_C"/>
</dbReference>
<dbReference type="InterPro" id="IPR013512">
    <property type="entry name" value="DXP_reductoisomerase_N"/>
</dbReference>
<dbReference type="InterPro" id="IPR026877">
    <property type="entry name" value="DXPR_C"/>
</dbReference>
<dbReference type="InterPro" id="IPR036169">
    <property type="entry name" value="DXPR_C_sf"/>
</dbReference>
<dbReference type="InterPro" id="IPR036291">
    <property type="entry name" value="NAD(P)-bd_dom_sf"/>
</dbReference>
<dbReference type="NCBIfam" id="TIGR00243">
    <property type="entry name" value="Dxr"/>
    <property type="match status" value="1"/>
</dbReference>
<dbReference type="NCBIfam" id="NF003938">
    <property type="entry name" value="PRK05447.1-1"/>
    <property type="match status" value="1"/>
</dbReference>
<dbReference type="NCBIfam" id="NF009114">
    <property type="entry name" value="PRK12464.1"/>
    <property type="match status" value="1"/>
</dbReference>
<dbReference type="PANTHER" id="PTHR30525">
    <property type="entry name" value="1-DEOXY-D-XYLULOSE 5-PHOSPHATE REDUCTOISOMERASE"/>
    <property type="match status" value="1"/>
</dbReference>
<dbReference type="PANTHER" id="PTHR30525:SF0">
    <property type="entry name" value="1-DEOXY-D-XYLULOSE 5-PHOSPHATE REDUCTOISOMERASE, CHLOROPLASTIC"/>
    <property type="match status" value="1"/>
</dbReference>
<dbReference type="Pfam" id="PF08436">
    <property type="entry name" value="DXP_redisom_C"/>
    <property type="match status" value="1"/>
</dbReference>
<dbReference type="Pfam" id="PF02670">
    <property type="entry name" value="DXP_reductoisom"/>
    <property type="match status" value="1"/>
</dbReference>
<dbReference type="Pfam" id="PF13288">
    <property type="entry name" value="DXPR_C"/>
    <property type="match status" value="1"/>
</dbReference>
<dbReference type="PIRSF" id="PIRSF006205">
    <property type="entry name" value="Dxp_reductismrs"/>
    <property type="match status" value="1"/>
</dbReference>
<dbReference type="SUPFAM" id="SSF69055">
    <property type="entry name" value="1-deoxy-D-xylulose-5-phosphate reductoisomerase, C-terminal domain"/>
    <property type="match status" value="1"/>
</dbReference>
<dbReference type="SUPFAM" id="SSF55347">
    <property type="entry name" value="Glyceraldehyde-3-phosphate dehydrogenase-like, C-terminal domain"/>
    <property type="match status" value="1"/>
</dbReference>
<dbReference type="SUPFAM" id="SSF51735">
    <property type="entry name" value="NAD(P)-binding Rossmann-fold domains"/>
    <property type="match status" value="1"/>
</dbReference>
<proteinExistence type="inferred from homology"/>
<gene>
    <name evidence="1" type="primary">dxr</name>
    <name type="ordered locus">CV_2202</name>
</gene>
<sequence length="394" mass="41674">MTKPQGIAVLGATGSVGCNTLDVVARHPERYRVVALTAHRQLDKLFEQARRFCPDYLVVADADAAARLRARLAEAGLRSEVLHGADALVQVAALPEVDAVMASIVGAAGLPSALAAARAGKRILLANKESLVVAGRLFMDAVRASGSALLPVDSEHSAIFQSLPADYAGNPDGAGVRKIILTASGGPFRNRPAADLAHVTPDEACRHPNWSMGRKISVDSATLMNKGLEVIEARWLFNVPPSRIEVAVHPQSVIHSMVQYRDGSVMAQLGSPDMRTPIACALAWPERIDAGVEPMDFFSLSDLTFEKPDLERFPCLQLAFDALEMGGDAPAVLNAANEVAVAAFLAGRLRFVDIPRVVAASLSGVSCAASDSLEGLLARDEEARRFAEGGVAAC</sequence>
<feature type="chain" id="PRO_0000163635" description="1-deoxy-D-xylulose 5-phosphate reductoisomerase">
    <location>
        <begin position="1"/>
        <end position="394"/>
    </location>
</feature>
<feature type="binding site" evidence="1">
    <location>
        <position position="13"/>
    </location>
    <ligand>
        <name>NADPH</name>
        <dbReference type="ChEBI" id="CHEBI:57783"/>
    </ligand>
</feature>
<feature type="binding site" evidence="1">
    <location>
        <position position="14"/>
    </location>
    <ligand>
        <name>NADPH</name>
        <dbReference type="ChEBI" id="CHEBI:57783"/>
    </ligand>
</feature>
<feature type="binding site" evidence="1">
    <location>
        <position position="15"/>
    </location>
    <ligand>
        <name>NADPH</name>
        <dbReference type="ChEBI" id="CHEBI:57783"/>
    </ligand>
</feature>
<feature type="binding site" evidence="1">
    <location>
        <position position="16"/>
    </location>
    <ligand>
        <name>NADPH</name>
        <dbReference type="ChEBI" id="CHEBI:57783"/>
    </ligand>
</feature>
<feature type="binding site" evidence="1">
    <location>
        <position position="40"/>
    </location>
    <ligand>
        <name>NADPH</name>
        <dbReference type="ChEBI" id="CHEBI:57783"/>
    </ligand>
</feature>
<feature type="binding site" evidence="1">
    <location>
        <position position="41"/>
    </location>
    <ligand>
        <name>NADPH</name>
        <dbReference type="ChEBI" id="CHEBI:57783"/>
    </ligand>
</feature>
<feature type="binding site" evidence="1">
    <location>
        <position position="127"/>
    </location>
    <ligand>
        <name>NADPH</name>
        <dbReference type="ChEBI" id="CHEBI:57783"/>
    </ligand>
</feature>
<feature type="binding site" evidence="1">
    <location>
        <position position="128"/>
    </location>
    <ligand>
        <name>1-deoxy-D-xylulose 5-phosphate</name>
        <dbReference type="ChEBI" id="CHEBI:57792"/>
    </ligand>
</feature>
<feature type="binding site" evidence="1">
    <location>
        <position position="129"/>
    </location>
    <ligand>
        <name>NADPH</name>
        <dbReference type="ChEBI" id="CHEBI:57783"/>
    </ligand>
</feature>
<feature type="binding site" evidence="1">
    <location>
        <position position="153"/>
    </location>
    <ligand>
        <name>Mn(2+)</name>
        <dbReference type="ChEBI" id="CHEBI:29035"/>
    </ligand>
</feature>
<feature type="binding site" evidence="1">
    <location>
        <position position="154"/>
    </location>
    <ligand>
        <name>1-deoxy-D-xylulose 5-phosphate</name>
        <dbReference type="ChEBI" id="CHEBI:57792"/>
    </ligand>
</feature>
<feature type="binding site" evidence="1">
    <location>
        <position position="155"/>
    </location>
    <ligand>
        <name>1-deoxy-D-xylulose 5-phosphate</name>
        <dbReference type="ChEBI" id="CHEBI:57792"/>
    </ligand>
</feature>
<feature type="binding site" evidence="1">
    <location>
        <position position="155"/>
    </location>
    <ligand>
        <name>Mn(2+)</name>
        <dbReference type="ChEBI" id="CHEBI:29035"/>
    </ligand>
</feature>
<feature type="binding site" evidence="1">
    <location>
        <position position="184"/>
    </location>
    <ligand>
        <name>1-deoxy-D-xylulose 5-phosphate</name>
        <dbReference type="ChEBI" id="CHEBI:57792"/>
    </ligand>
</feature>
<feature type="binding site" evidence="1">
    <location>
        <position position="207"/>
    </location>
    <ligand>
        <name>1-deoxy-D-xylulose 5-phosphate</name>
        <dbReference type="ChEBI" id="CHEBI:57792"/>
    </ligand>
</feature>
<feature type="binding site" evidence="1">
    <location>
        <position position="213"/>
    </location>
    <ligand>
        <name>NADPH</name>
        <dbReference type="ChEBI" id="CHEBI:57783"/>
    </ligand>
</feature>
<feature type="binding site" evidence="1">
    <location>
        <position position="220"/>
    </location>
    <ligand>
        <name>1-deoxy-D-xylulose 5-phosphate</name>
        <dbReference type="ChEBI" id="CHEBI:57792"/>
    </ligand>
</feature>
<feature type="binding site" evidence="1">
    <location>
        <position position="225"/>
    </location>
    <ligand>
        <name>1-deoxy-D-xylulose 5-phosphate</name>
        <dbReference type="ChEBI" id="CHEBI:57792"/>
    </ligand>
</feature>
<feature type="binding site" evidence="1">
    <location>
        <position position="226"/>
    </location>
    <ligand>
        <name>1-deoxy-D-xylulose 5-phosphate</name>
        <dbReference type="ChEBI" id="CHEBI:57792"/>
    </ligand>
</feature>
<feature type="binding site" evidence="1">
    <location>
        <position position="229"/>
    </location>
    <ligand>
        <name>1-deoxy-D-xylulose 5-phosphate</name>
        <dbReference type="ChEBI" id="CHEBI:57792"/>
    </ligand>
</feature>
<feature type="binding site" evidence="1">
    <location>
        <position position="229"/>
    </location>
    <ligand>
        <name>Mn(2+)</name>
        <dbReference type="ChEBI" id="CHEBI:29035"/>
    </ligand>
</feature>
<evidence type="ECO:0000255" key="1">
    <source>
        <dbReference type="HAMAP-Rule" id="MF_00183"/>
    </source>
</evidence>
<accession>Q7NVY8</accession>
<name>DXR_CHRVO</name>
<organism>
    <name type="scientific">Chromobacterium violaceum (strain ATCC 12472 / DSM 30191 / JCM 1249 / CCUG 213 / NBRC 12614 / NCIMB 9131 / NCTC 9757 / MK)</name>
    <dbReference type="NCBI Taxonomy" id="243365"/>
    <lineage>
        <taxon>Bacteria</taxon>
        <taxon>Pseudomonadati</taxon>
        <taxon>Pseudomonadota</taxon>
        <taxon>Betaproteobacteria</taxon>
        <taxon>Neisseriales</taxon>
        <taxon>Chromobacteriaceae</taxon>
        <taxon>Chromobacterium</taxon>
    </lineage>
</organism>
<comment type="function">
    <text evidence="1">Catalyzes the NADPH-dependent rearrangement and reduction of 1-deoxy-D-xylulose-5-phosphate (DXP) to 2-C-methyl-D-erythritol 4-phosphate (MEP).</text>
</comment>
<comment type="catalytic activity">
    <reaction evidence="1">
        <text>2-C-methyl-D-erythritol 4-phosphate + NADP(+) = 1-deoxy-D-xylulose 5-phosphate + NADPH + H(+)</text>
        <dbReference type="Rhea" id="RHEA:13717"/>
        <dbReference type="ChEBI" id="CHEBI:15378"/>
        <dbReference type="ChEBI" id="CHEBI:57783"/>
        <dbReference type="ChEBI" id="CHEBI:57792"/>
        <dbReference type="ChEBI" id="CHEBI:58262"/>
        <dbReference type="ChEBI" id="CHEBI:58349"/>
        <dbReference type="EC" id="1.1.1.267"/>
    </reaction>
    <physiologicalReaction direction="right-to-left" evidence="1">
        <dbReference type="Rhea" id="RHEA:13719"/>
    </physiologicalReaction>
</comment>
<comment type="cofactor">
    <cofactor evidence="1">
        <name>Mg(2+)</name>
        <dbReference type="ChEBI" id="CHEBI:18420"/>
    </cofactor>
    <cofactor evidence="1">
        <name>Mn(2+)</name>
        <dbReference type="ChEBI" id="CHEBI:29035"/>
    </cofactor>
</comment>
<comment type="pathway">
    <text evidence="1">Isoprenoid biosynthesis; isopentenyl diphosphate biosynthesis via DXP pathway; isopentenyl diphosphate from 1-deoxy-D-xylulose 5-phosphate: step 1/6.</text>
</comment>
<comment type="similarity">
    <text evidence="1">Belongs to the DXR family.</text>
</comment>